<evidence type="ECO:0000255" key="1">
    <source>
        <dbReference type="HAMAP-Rule" id="MF_00372"/>
    </source>
</evidence>
<reference key="1">
    <citation type="submission" date="2007-05" db="EMBL/GenBank/DDBJ databases">
        <title>Complete sequence of chromosome of Acidiphilium cryptum JF-5.</title>
        <authorList>
            <consortium name="US DOE Joint Genome Institute"/>
            <person name="Copeland A."/>
            <person name="Lucas S."/>
            <person name="Lapidus A."/>
            <person name="Barry K."/>
            <person name="Detter J.C."/>
            <person name="Glavina del Rio T."/>
            <person name="Hammon N."/>
            <person name="Israni S."/>
            <person name="Dalin E."/>
            <person name="Tice H."/>
            <person name="Pitluck S."/>
            <person name="Sims D."/>
            <person name="Brettin T."/>
            <person name="Bruce D."/>
            <person name="Han C."/>
            <person name="Schmutz J."/>
            <person name="Larimer F."/>
            <person name="Land M."/>
            <person name="Hauser L."/>
            <person name="Kyrpides N."/>
            <person name="Kim E."/>
            <person name="Magnuson T."/>
            <person name="Richardson P."/>
        </authorList>
    </citation>
    <scope>NUCLEOTIDE SEQUENCE [LARGE SCALE GENOMIC DNA]</scope>
    <source>
        <strain>JF-5</strain>
    </source>
</reference>
<feature type="chain" id="PRO_1000007139" description="Imidazolonepropionase">
    <location>
        <begin position="1"/>
        <end position="401"/>
    </location>
</feature>
<feature type="binding site" evidence="1">
    <location>
        <position position="70"/>
    </location>
    <ligand>
        <name>Fe(3+)</name>
        <dbReference type="ChEBI" id="CHEBI:29034"/>
    </ligand>
</feature>
<feature type="binding site" evidence="1">
    <location>
        <position position="70"/>
    </location>
    <ligand>
        <name>Zn(2+)</name>
        <dbReference type="ChEBI" id="CHEBI:29105"/>
    </ligand>
</feature>
<feature type="binding site" evidence="1">
    <location>
        <position position="72"/>
    </location>
    <ligand>
        <name>Fe(3+)</name>
        <dbReference type="ChEBI" id="CHEBI:29034"/>
    </ligand>
</feature>
<feature type="binding site" evidence="1">
    <location>
        <position position="72"/>
    </location>
    <ligand>
        <name>Zn(2+)</name>
        <dbReference type="ChEBI" id="CHEBI:29105"/>
    </ligand>
</feature>
<feature type="binding site" evidence="1">
    <location>
        <position position="79"/>
    </location>
    <ligand>
        <name>4-imidazolone-5-propanoate</name>
        <dbReference type="ChEBI" id="CHEBI:77893"/>
    </ligand>
</feature>
<feature type="binding site" evidence="1">
    <location>
        <position position="142"/>
    </location>
    <ligand>
        <name>4-imidazolone-5-propanoate</name>
        <dbReference type="ChEBI" id="CHEBI:77893"/>
    </ligand>
</feature>
<feature type="binding site" evidence="1">
    <location>
        <position position="142"/>
    </location>
    <ligand>
        <name>N-formimidoyl-L-glutamate</name>
        <dbReference type="ChEBI" id="CHEBI:58928"/>
    </ligand>
</feature>
<feature type="binding site" evidence="1">
    <location>
        <position position="175"/>
    </location>
    <ligand>
        <name>4-imidazolone-5-propanoate</name>
        <dbReference type="ChEBI" id="CHEBI:77893"/>
    </ligand>
</feature>
<feature type="binding site" evidence="1">
    <location>
        <position position="238"/>
    </location>
    <ligand>
        <name>Fe(3+)</name>
        <dbReference type="ChEBI" id="CHEBI:29034"/>
    </ligand>
</feature>
<feature type="binding site" evidence="1">
    <location>
        <position position="238"/>
    </location>
    <ligand>
        <name>Zn(2+)</name>
        <dbReference type="ChEBI" id="CHEBI:29105"/>
    </ligand>
</feature>
<feature type="binding site" evidence="1">
    <location>
        <position position="241"/>
    </location>
    <ligand>
        <name>4-imidazolone-5-propanoate</name>
        <dbReference type="ChEBI" id="CHEBI:77893"/>
    </ligand>
</feature>
<feature type="binding site" evidence="1">
    <location>
        <position position="313"/>
    </location>
    <ligand>
        <name>Fe(3+)</name>
        <dbReference type="ChEBI" id="CHEBI:29034"/>
    </ligand>
</feature>
<feature type="binding site" evidence="1">
    <location>
        <position position="313"/>
    </location>
    <ligand>
        <name>Zn(2+)</name>
        <dbReference type="ChEBI" id="CHEBI:29105"/>
    </ligand>
</feature>
<feature type="binding site" evidence="1">
    <location>
        <position position="315"/>
    </location>
    <ligand>
        <name>N-formimidoyl-L-glutamate</name>
        <dbReference type="ChEBI" id="CHEBI:58928"/>
    </ligand>
</feature>
<feature type="binding site" evidence="1">
    <location>
        <position position="317"/>
    </location>
    <ligand>
        <name>N-formimidoyl-L-glutamate</name>
        <dbReference type="ChEBI" id="CHEBI:58928"/>
    </ligand>
</feature>
<feature type="binding site" evidence="1">
    <location>
        <position position="318"/>
    </location>
    <ligand>
        <name>4-imidazolone-5-propanoate</name>
        <dbReference type="ChEBI" id="CHEBI:77893"/>
    </ligand>
</feature>
<protein>
    <recommendedName>
        <fullName evidence="1">Imidazolonepropionase</fullName>
        <ecNumber evidence="1">3.5.2.7</ecNumber>
    </recommendedName>
    <alternativeName>
        <fullName evidence="1">Imidazolone-5-propionate hydrolase</fullName>
    </alternativeName>
</protein>
<dbReference type="EC" id="3.5.2.7" evidence="1"/>
<dbReference type="EMBL" id="CP000697">
    <property type="protein sequence ID" value="ABQ30950.1"/>
    <property type="molecule type" value="Genomic_DNA"/>
</dbReference>
<dbReference type="RefSeq" id="WP_011942461.1">
    <property type="nucleotide sequence ID" value="NC_009484.1"/>
</dbReference>
<dbReference type="SMR" id="A5FZB8"/>
<dbReference type="STRING" id="349163.Acry_1746"/>
<dbReference type="KEGG" id="acr:Acry_1746"/>
<dbReference type="eggNOG" id="COG1228">
    <property type="taxonomic scope" value="Bacteria"/>
</dbReference>
<dbReference type="HOGENOM" id="CLU_041647_0_0_5"/>
<dbReference type="UniPathway" id="UPA00379">
    <property type="reaction ID" value="UER00551"/>
</dbReference>
<dbReference type="Proteomes" id="UP000000245">
    <property type="component" value="Chromosome"/>
</dbReference>
<dbReference type="GO" id="GO:0005737">
    <property type="term" value="C:cytoplasm"/>
    <property type="evidence" value="ECO:0007669"/>
    <property type="project" value="UniProtKB-SubCell"/>
</dbReference>
<dbReference type="GO" id="GO:0050480">
    <property type="term" value="F:imidazolonepropionase activity"/>
    <property type="evidence" value="ECO:0007669"/>
    <property type="project" value="UniProtKB-UniRule"/>
</dbReference>
<dbReference type="GO" id="GO:0005506">
    <property type="term" value="F:iron ion binding"/>
    <property type="evidence" value="ECO:0007669"/>
    <property type="project" value="UniProtKB-UniRule"/>
</dbReference>
<dbReference type="GO" id="GO:0008270">
    <property type="term" value="F:zinc ion binding"/>
    <property type="evidence" value="ECO:0007669"/>
    <property type="project" value="UniProtKB-UniRule"/>
</dbReference>
<dbReference type="GO" id="GO:0019556">
    <property type="term" value="P:L-histidine catabolic process to glutamate and formamide"/>
    <property type="evidence" value="ECO:0007669"/>
    <property type="project" value="UniProtKB-UniPathway"/>
</dbReference>
<dbReference type="GO" id="GO:0019557">
    <property type="term" value="P:L-histidine catabolic process to glutamate and formate"/>
    <property type="evidence" value="ECO:0007669"/>
    <property type="project" value="UniProtKB-UniPathway"/>
</dbReference>
<dbReference type="FunFam" id="3.20.20.140:FF:000007">
    <property type="entry name" value="Imidazolonepropionase"/>
    <property type="match status" value="1"/>
</dbReference>
<dbReference type="Gene3D" id="3.20.20.140">
    <property type="entry name" value="Metal-dependent hydrolases"/>
    <property type="match status" value="1"/>
</dbReference>
<dbReference type="Gene3D" id="2.30.40.10">
    <property type="entry name" value="Urease, subunit C, domain 1"/>
    <property type="match status" value="1"/>
</dbReference>
<dbReference type="HAMAP" id="MF_00372">
    <property type="entry name" value="HutI"/>
    <property type="match status" value="1"/>
</dbReference>
<dbReference type="InterPro" id="IPR006680">
    <property type="entry name" value="Amidohydro-rel"/>
</dbReference>
<dbReference type="InterPro" id="IPR005920">
    <property type="entry name" value="HutI"/>
</dbReference>
<dbReference type="InterPro" id="IPR011059">
    <property type="entry name" value="Metal-dep_hydrolase_composite"/>
</dbReference>
<dbReference type="InterPro" id="IPR032466">
    <property type="entry name" value="Metal_Hydrolase"/>
</dbReference>
<dbReference type="NCBIfam" id="TIGR01224">
    <property type="entry name" value="hutI"/>
    <property type="match status" value="1"/>
</dbReference>
<dbReference type="PANTHER" id="PTHR42752">
    <property type="entry name" value="IMIDAZOLONEPROPIONASE"/>
    <property type="match status" value="1"/>
</dbReference>
<dbReference type="PANTHER" id="PTHR42752:SF1">
    <property type="entry name" value="IMIDAZOLONEPROPIONASE-RELATED"/>
    <property type="match status" value="1"/>
</dbReference>
<dbReference type="Pfam" id="PF01979">
    <property type="entry name" value="Amidohydro_1"/>
    <property type="match status" value="1"/>
</dbReference>
<dbReference type="SUPFAM" id="SSF51338">
    <property type="entry name" value="Composite domain of metallo-dependent hydrolases"/>
    <property type="match status" value="1"/>
</dbReference>
<dbReference type="SUPFAM" id="SSF51556">
    <property type="entry name" value="Metallo-dependent hydrolases"/>
    <property type="match status" value="1"/>
</dbReference>
<keyword id="KW-0963">Cytoplasm</keyword>
<keyword id="KW-0369">Histidine metabolism</keyword>
<keyword id="KW-0378">Hydrolase</keyword>
<keyword id="KW-0408">Iron</keyword>
<keyword id="KW-0479">Metal-binding</keyword>
<keyword id="KW-1185">Reference proteome</keyword>
<keyword id="KW-0862">Zinc</keyword>
<proteinExistence type="inferred from homology"/>
<accession>A5FZB8</accession>
<comment type="function">
    <text evidence="1">Catalyzes the hydrolytic cleavage of the carbon-nitrogen bond in imidazolone-5-propanoate to yield N-formimidoyl-L-glutamate. It is the third step in the universal histidine degradation pathway.</text>
</comment>
<comment type="catalytic activity">
    <reaction evidence="1">
        <text>4-imidazolone-5-propanoate + H2O = N-formimidoyl-L-glutamate</text>
        <dbReference type="Rhea" id="RHEA:23660"/>
        <dbReference type="ChEBI" id="CHEBI:15377"/>
        <dbReference type="ChEBI" id="CHEBI:58928"/>
        <dbReference type="ChEBI" id="CHEBI:77893"/>
        <dbReference type="EC" id="3.5.2.7"/>
    </reaction>
</comment>
<comment type="cofactor">
    <cofactor evidence="1">
        <name>Zn(2+)</name>
        <dbReference type="ChEBI" id="CHEBI:29105"/>
    </cofactor>
    <cofactor evidence="1">
        <name>Fe(3+)</name>
        <dbReference type="ChEBI" id="CHEBI:29034"/>
    </cofactor>
    <text evidence="1">Binds 1 zinc or iron ion per subunit.</text>
</comment>
<comment type="pathway">
    <text evidence="1">Amino-acid degradation; L-histidine degradation into L-glutamate; N-formimidoyl-L-glutamate from L-histidine: step 3/3.</text>
</comment>
<comment type="subcellular location">
    <subcellularLocation>
        <location evidence="1">Cytoplasm</location>
    </subcellularLocation>
</comment>
<comment type="similarity">
    <text evidence="1">Belongs to the metallo-dependent hydrolases superfamily. HutI family.</text>
</comment>
<gene>
    <name evidence="1" type="primary">hutI</name>
    <name type="ordered locus">Acry_1746</name>
</gene>
<name>HUTI_ACICJ</name>
<organism>
    <name type="scientific">Acidiphilium cryptum (strain JF-5)</name>
    <dbReference type="NCBI Taxonomy" id="349163"/>
    <lineage>
        <taxon>Bacteria</taxon>
        <taxon>Pseudomonadati</taxon>
        <taxon>Pseudomonadota</taxon>
        <taxon>Alphaproteobacteria</taxon>
        <taxon>Acetobacterales</taxon>
        <taxon>Acidocellaceae</taxon>
        <taxon>Acidiphilium</taxon>
    </lineage>
</organism>
<sequence>MRCDRLWRNARLATCAPDRPGLGVVEGGAVASRDGRIVWAGPEAEMPSLEAAETIDCAGRWITPGLVDCHTHLIFGGDRSGEFARRLAGESYESIAREGGGIRATMRATRALDEAAMRAGAEARLAAWAAEGVTTVEIKSGYGLDEATELAMLRAARAIGRAGRFRVAATYLGAHTMPPEMDRAAYLDLVCRRMIPAIAEAGLADAVDAFCEEIAFGAGEVAAVFAAARAAGLAVKLHADQRAEGGGAALAARFGALSADHLEYASAEGIAAMARAGSVAVLLPGAYYVLREAKRPDVAAMRAAGCRMAVATDCNPGTSPIASLRLSAQMACVFFGLSFEEAWLGITRHAADALGLGGECGAIDAGRSCDLAIWSVDSLDQVLAWVGPAPLERRVLKGVDA</sequence>